<dbReference type="EMBL" id="AH007774">
    <property type="protein sequence ID" value="AAD34557.1"/>
    <property type="molecule type" value="Genomic_DNA"/>
</dbReference>
<dbReference type="EMBL" id="KJ201024">
    <property type="protein sequence ID" value="AIC76506.1"/>
    <property type="molecule type" value="Genomic_DNA"/>
</dbReference>
<dbReference type="SMR" id="Q9Y7D3"/>
<dbReference type="VEuPathDB" id="FungiDB:ATEG_09966"/>
<dbReference type="GO" id="GO:0005634">
    <property type="term" value="C:nucleus"/>
    <property type="evidence" value="ECO:0007669"/>
    <property type="project" value="UniProtKB-SubCell"/>
</dbReference>
<dbReference type="GO" id="GO:0003677">
    <property type="term" value="F:DNA binding"/>
    <property type="evidence" value="ECO:0007669"/>
    <property type="project" value="UniProtKB-KW"/>
</dbReference>
<dbReference type="GO" id="GO:0000981">
    <property type="term" value="F:DNA-binding transcription factor activity, RNA polymerase II-specific"/>
    <property type="evidence" value="ECO:0007669"/>
    <property type="project" value="InterPro"/>
</dbReference>
<dbReference type="GO" id="GO:0008270">
    <property type="term" value="F:zinc ion binding"/>
    <property type="evidence" value="ECO:0007669"/>
    <property type="project" value="InterPro"/>
</dbReference>
<dbReference type="GO" id="GO:0001080">
    <property type="term" value="P:nitrogen catabolite activation of transcription from RNA polymerase II promoter"/>
    <property type="evidence" value="ECO:0007669"/>
    <property type="project" value="TreeGrafter"/>
</dbReference>
<dbReference type="CDD" id="cd00067">
    <property type="entry name" value="GAL4"/>
    <property type="match status" value="1"/>
</dbReference>
<dbReference type="Gene3D" id="4.10.240.10">
    <property type="entry name" value="Zn(2)-C6 fungal-type DNA-binding domain"/>
    <property type="match status" value="1"/>
</dbReference>
<dbReference type="InterPro" id="IPR050797">
    <property type="entry name" value="Carb_Metab_Trans_Reg"/>
</dbReference>
<dbReference type="InterPro" id="IPR036864">
    <property type="entry name" value="Zn2-C6_fun-type_DNA-bd_sf"/>
</dbReference>
<dbReference type="InterPro" id="IPR001138">
    <property type="entry name" value="Zn2Cys6_DnaBD"/>
</dbReference>
<dbReference type="PANTHER" id="PTHR31668">
    <property type="entry name" value="GLUCOSE TRANSPORT TRANSCRIPTION REGULATOR RGT1-RELATED-RELATED"/>
    <property type="match status" value="1"/>
</dbReference>
<dbReference type="PANTHER" id="PTHR31668:SF4">
    <property type="entry name" value="TRANSCRIPTIONAL ACTIVATOR PROTEIN DAL81"/>
    <property type="match status" value="1"/>
</dbReference>
<dbReference type="Pfam" id="PF00172">
    <property type="entry name" value="Zn_clus"/>
    <property type="match status" value="1"/>
</dbReference>
<dbReference type="SMART" id="SM00066">
    <property type="entry name" value="GAL4"/>
    <property type="match status" value="1"/>
</dbReference>
<dbReference type="SUPFAM" id="SSF57701">
    <property type="entry name" value="Zn2/Cys6 DNA-binding domain"/>
    <property type="match status" value="1"/>
</dbReference>
<dbReference type="PROSITE" id="PS00463">
    <property type="entry name" value="ZN2_CY6_FUNGAL_1"/>
    <property type="match status" value="1"/>
</dbReference>
<dbReference type="PROSITE" id="PS50048">
    <property type="entry name" value="ZN2_CY6_FUNGAL_2"/>
    <property type="match status" value="1"/>
</dbReference>
<feature type="chain" id="PRO_0000430275" description="Transcriptional regulator LovE">
    <location>
        <begin position="1"/>
        <end position="503"/>
    </location>
</feature>
<feature type="DNA-binding region" description="Zn(2)-C6 fungal-type" evidence="1">
    <location>
        <begin position="35"/>
        <end position="67"/>
    </location>
</feature>
<feature type="region of interest" description="Disordered" evidence="2">
    <location>
        <begin position="89"/>
        <end position="124"/>
    </location>
</feature>
<feature type="region of interest" description="Disordered" evidence="2">
    <location>
        <begin position="331"/>
        <end position="358"/>
    </location>
</feature>
<feature type="compositionally biased region" description="Low complexity" evidence="2">
    <location>
        <begin position="339"/>
        <end position="357"/>
    </location>
</feature>
<protein>
    <recommendedName>
        <fullName evidence="7">Transcriptional regulator LovE</fullName>
    </recommendedName>
    <alternativeName>
        <fullName evidence="7">Lovastatin biosynthesis cluster protein E</fullName>
    </alternativeName>
</protein>
<evidence type="ECO:0000255" key="1">
    <source>
        <dbReference type="PROSITE-ProRule" id="PRU00227"/>
    </source>
</evidence>
<evidence type="ECO:0000256" key="2">
    <source>
        <dbReference type="SAM" id="MobiDB-lite"/>
    </source>
</evidence>
<evidence type="ECO:0000269" key="3">
    <source>
    </source>
</evidence>
<evidence type="ECO:0000269" key="4">
    <source>
    </source>
</evidence>
<evidence type="ECO:0000269" key="5">
    <source>
    </source>
</evidence>
<evidence type="ECO:0000269" key="6">
    <source>
    </source>
</evidence>
<evidence type="ECO:0000303" key="7">
    <source>
    </source>
</evidence>
<evidence type="ECO:0000305" key="8">
    <source>
    </source>
</evidence>
<comment type="function">
    <text evidence="8">Transcription factor that regulates the expression of the he gene cluster that mediates the biosynthesis of lovastatin (also known as mevinolin, mevacor or monacolin K), a hypolipidemic inhibitor of (3S)-hydroxymethylglutaryl-coenzyme A (HMG-CoA) reductase (HMGR).</text>
</comment>
<comment type="subcellular location">
    <subcellularLocation>
        <location evidence="1">Nucleus</location>
    </subcellularLocation>
</comment>
<comment type="induction">
    <text evidence="3">Highly expressed during the first day of culture on solid medium; thereafter levels decrease but remain high. Expressed at much lower levels in liquid culture.</text>
</comment>
<comment type="biotechnology">
    <text evidence="4 5 6">Lovastatin acts as a hypolipidemic agent that works as inhibitor of (3S)-hydroxymethylglutaryl-coenzyme A (HMG-CoA) reductase (HMGR) which reduces HMG-CoA to mevalonate and is the key step in cholesterol biosynthesis (PubMed:6933445). Lovastatin, simvastatin and related compounds are widely used to treat hypercholesteremia and reduce the risk of cardiovascular disease (PubMed:6933445). Furthermore, statins such as lovastatin were found to be anticancer agents (PubMed:29236027, PubMed:29932104).</text>
</comment>
<keyword id="KW-0238">DNA-binding</keyword>
<keyword id="KW-0479">Metal-binding</keyword>
<keyword id="KW-0539">Nucleus</keyword>
<keyword id="KW-0804">Transcription</keyword>
<keyword id="KW-0805">Transcription regulation</keyword>
<keyword id="KW-0862">Zinc</keyword>
<gene>
    <name evidence="7" type="primary">lovE</name>
</gene>
<sequence length="503" mass="55427">MAADQGIFTNSVTLSPVEGSRTGGTLPRRAFRRSCDRCHAQKIKCTGNKEVTGRAPCQRCQQAGLRCVYSERCPKRKLRQSRAADLVSADPDPCLHMSSPPVPSQSLPLDVSESHSSNTSRQFLDPPDSYDWSWTSIGTDEAIDTDCWGLSQCDGGFSCQLEPTLPDLPSPFESTVEKAPLPPVSSDIARAASAQRELFDDLSAVSQELEEILLAVTVEWPKQEIWTRASPHSPTASRERIAQRRQNVWANWLTDLHMFSLDPIGMFFNASRRLLTVLRQQAQADCHQGTLDECLRTKNLFTAVHCYILNVRILTAISELLLSQIRRTQNSHMSPLEGSRSQSPSRDDTSSSSGHSSVDTIPFFSENLPIGELFSYVDPLTHALFSACTTLHVGVQLLRENEITLGVHSAQGIAASISMSGEPGEDIARTGATNSARCEEQPTTPAARVLFMFLSDEGAFQEAKSAGSRGRTIAALRRCYEDIFSLARKHKHGMLRDLNNIPP</sequence>
<proteinExistence type="evidence at protein level"/>
<accession>Q9Y7D3</accession>
<reference key="1">
    <citation type="journal article" date="1999" name="Science">
        <title>Modulation of polyketide synthase activity by accessory proteins during lovastatin biosynthesis.</title>
        <authorList>
            <person name="Kennedy J."/>
            <person name="Auclair K."/>
            <person name="Kendrew S.G."/>
            <person name="Park C."/>
            <person name="Vederas J.C."/>
            <person name="Hutchinson C.R."/>
        </authorList>
    </citation>
    <scope>NUCLEOTIDE SEQUENCE [GENOMIC DNA]</scope>
    <scope>IDENTIFICATION</scope>
    <scope>PATHWAY</scope>
    <scope>PROBABLE FUNCTION</scope>
    <source>
        <strain>ATCC 20542 / MF4845</strain>
    </source>
</reference>
<reference key="2">
    <citation type="journal article" date="2009" name="Chin. Med. J.">
        <title>Cloning and bioinformatic analysis of lovastatin biosynthesis regulatory gene lovE.</title>
        <authorList>
            <person name="Huang X."/>
            <person name="Li H.M."/>
        </authorList>
    </citation>
    <scope>NUCLEOTIDE SEQUENCE [GENOMIC DNA]</scope>
    <scope>IDENTIFICATION</scope>
    <source>
        <strain>CCTCC AF93208</strain>
    </source>
</reference>
<reference key="3">
    <citation type="submission" date="2014-06" db="EMBL/GenBank/DDBJ databases">
        <title>Molecular characterization and bioinformatic analysis of lovastatin biosynthetic regulatory gene lovE in Aspergillus terreus PEMS 01.</title>
        <authorList>
            <person name="Sasirekhamani M."/>
            <person name="Ebenezer P."/>
            <person name="Devakumar K.M."/>
        </authorList>
    </citation>
    <scope>NUCLEOTIDE SEQUENCE [GENOMIC DNA]</scope>
</reference>
<reference key="4">
    <citation type="journal article" date="1980" name="Proc. Natl. Acad. Sci. U.S.A.">
        <title>Mevinolin: a highly potent competitive inhibitor of hydroxymethylglutaryl-coenzyme A reductase and a cholesterol-lowering agent.</title>
        <authorList>
            <person name="Alberts A.W."/>
            <person name="Chen J."/>
            <person name="Kuron G."/>
            <person name="Hunt V."/>
            <person name="Huff J."/>
            <person name="Hoffman C."/>
            <person name="Rothrock J."/>
            <person name="Lopez M."/>
            <person name="Joshua H."/>
            <person name="Harris E."/>
            <person name="Patchett A."/>
            <person name="Monaghan R."/>
            <person name="Currie S."/>
            <person name="Stapley E."/>
            <person name="Albers-Schonberg G."/>
            <person name="Hensens O."/>
            <person name="Hirshfield J."/>
            <person name="Hoogsteen K."/>
            <person name="Liesch J."/>
            <person name="Springer J."/>
        </authorList>
    </citation>
    <scope>BIOTECHNOLOGY</scope>
</reference>
<reference key="5">
    <citation type="journal article" date="2008" name="Appl. Microbiol. Biotechnol.">
        <title>Lovastatin biosynthetic genes of Aspergillus terreus are expressed differentially in solid-state and in liquid submerged fermentation.</title>
        <authorList>
            <person name="Barrios-Gonzalez J."/>
            <person name="Banos J.G."/>
            <person name="Covarrubias A.A."/>
            <person name="Garay-Arroyo A."/>
        </authorList>
    </citation>
    <scope>INDUCTION</scope>
    <scope>PROBABLE FUNCTION</scope>
</reference>
<reference key="6">
    <citation type="journal article" date="2017" name="Int. J. Mol. Sci.">
        <title>Simvastatin inhibits cell proliferation and migration in human anaplastic thyroid cancer.</title>
        <authorList>
            <person name="Chen M.C."/>
            <person name="Tsai Y.C."/>
            <person name="Tseng J.H."/>
            <person name="Liou J.J."/>
            <person name="Horng S."/>
            <person name="Wen H.C."/>
            <person name="Fan Y.C."/>
            <person name="Zhong W.B."/>
            <person name="Hsu S.P."/>
        </authorList>
    </citation>
    <scope>BIOTECHNOLOGY</scope>
</reference>
<reference key="7">
    <citation type="journal article" date="2018" name="Int. J. Mol. Sci.">
        <title>A synergistic anti-cancer effect of troglitazone and lovastatin in a human anaplastic thyroid cancer cell line and in a mouse xenograft model.</title>
        <authorList>
            <person name="Zhong W.B."/>
            <person name="Tsai Y.C."/>
            <person name="Chin L.H."/>
            <person name="Tseng J.H."/>
            <person name="Tang L.W."/>
            <person name="Horng S."/>
            <person name="Fan Y.C."/>
            <person name="Hsu S.P."/>
        </authorList>
    </citation>
    <scope>BIOTECHNOLOGY</scope>
</reference>
<name>LOVE_ASPTE</name>
<organism>
    <name type="scientific">Aspergillus terreus</name>
    <dbReference type="NCBI Taxonomy" id="33178"/>
    <lineage>
        <taxon>Eukaryota</taxon>
        <taxon>Fungi</taxon>
        <taxon>Dikarya</taxon>
        <taxon>Ascomycota</taxon>
        <taxon>Pezizomycotina</taxon>
        <taxon>Eurotiomycetes</taxon>
        <taxon>Eurotiomycetidae</taxon>
        <taxon>Eurotiales</taxon>
        <taxon>Aspergillaceae</taxon>
        <taxon>Aspergillus</taxon>
        <taxon>Aspergillus subgen. Circumdati</taxon>
    </lineage>
</organism>